<sequence length="547" mass="57303">MAAKEVLFGNDARVKMLAGVNVLANAVKVTLGPKGRNVVLDKSFGAPLITKDGVSVAKEIELEDKFENMGAQMVKEVASKANDAAGDGTTTATVLAQAIVTEGLKAVAAGMNPMDLKRGIDKAVIAAVAELKNLSQECSDTKAIAQVGTISANSDESIGEIIATAMERVGKEGVITVEEGQALENELDVVEGMQFDRGYLSPYFINKPETGSVELESPFILLVDKKVSNIRELLPILEGLAKTGKPLLIVAEDVEGEALATLVVNNMRGIVKVAAVKAPGFGDRRKAMLQDIAILTGGTVIAEEIGLELEKATLEDLGTAKRVIITKDDTTIIDGNGEETQIKARVAQIKIQAEESTSDYDKEKLQERMAKLAGGVAVIKVGAATEVEMKEKKARVEDALHATRAAVEEGVVAGGGVALVRVASKIGEVEVLNEDQKHGVIIALRAMEAPLRQIATNAGEEGSVVANNVKNGTGNYGYNAGNDTYGDMLEMGILDPTKVTRSALQFASSIAGLMITTECMVADVKEDAADMGGMGGMGGMGGMGGMM</sequence>
<organism>
    <name type="scientific">Shewanella halifaxensis (strain HAW-EB4)</name>
    <dbReference type="NCBI Taxonomy" id="458817"/>
    <lineage>
        <taxon>Bacteria</taxon>
        <taxon>Pseudomonadati</taxon>
        <taxon>Pseudomonadota</taxon>
        <taxon>Gammaproteobacteria</taxon>
        <taxon>Alteromonadales</taxon>
        <taxon>Shewanellaceae</taxon>
        <taxon>Shewanella</taxon>
    </lineage>
</organism>
<proteinExistence type="inferred from homology"/>
<reference key="1">
    <citation type="submission" date="2008-01" db="EMBL/GenBank/DDBJ databases">
        <title>Complete sequence of Shewanella halifaxensis HAW-EB4.</title>
        <authorList>
            <consortium name="US DOE Joint Genome Institute"/>
            <person name="Copeland A."/>
            <person name="Lucas S."/>
            <person name="Lapidus A."/>
            <person name="Glavina del Rio T."/>
            <person name="Dalin E."/>
            <person name="Tice H."/>
            <person name="Bruce D."/>
            <person name="Goodwin L."/>
            <person name="Pitluck S."/>
            <person name="Sims D."/>
            <person name="Brettin T."/>
            <person name="Detter J.C."/>
            <person name="Han C."/>
            <person name="Kuske C.R."/>
            <person name="Schmutz J."/>
            <person name="Larimer F."/>
            <person name="Land M."/>
            <person name="Hauser L."/>
            <person name="Kyrpides N."/>
            <person name="Kim E."/>
            <person name="Zhao J.-S."/>
            <person name="Richardson P."/>
        </authorList>
    </citation>
    <scope>NUCLEOTIDE SEQUENCE [LARGE SCALE GENOMIC DNA]</scope>
    <source>
        <strain>HAW-EB4</strain>
    </source>
</reference>
<dbReference type="EC" id="5.6.1.7" evidence="1"/>
<dbReference type="EMBL" id="CP000931">
    <property type="protein sequence ID" value="ABZ78316.1"/>
    <property type="molecule type" value="Genomic_DNA"/>
</dbReference>
<dbReference type="RefSeq" id="WP_012278834.1">
    <property type="nucleotide sequence ID" value="NC_010334.1"/>
</dbReference>
<dbReference type="SMR" id="B0TVL3"/>
<dbReference type="STRING" id="458817.Shal_3776"/>
<dbReference type="KEGG" id="shl:Shal_3776"/>
<dbReference type="eggNOG" id="COG0459">
    <property type="taxonomic scope" value="Bacteria"/>
</dbReference>
<dbReference type="HOGENOM" id="CLU_016503_3_0_6"/>
<dbReference type="OrthoDB" id="9766614at2"/>
<dbReference type="Proteomes" id="UP000001317">
    <property type="component" value="Chromosome"/>
</dbReference>
<dbReference type="GO" id="GO:0005737">
    <property type="term" value="C:cytoplasm"/>
    <property type="evidence" value="ECO:0007669"/>
    <property type="project" value="UniProtKB-SubCell"/>
</dbReference>
<dbReference type="GO" id="GO:0005524">
    <property type="term" value="F:ATP binding"/>
    <property type="evidence" value="ECO:0007669"/>
    <property type="project" value="UniProtKB-UniRule"/>
</dbReference>
<dbReference type="GO" id="GO:0140662">
    <property type="term" value="F:ATP-dependent protein folding chaperone"/>
    <property type="evidence" value="ECO:0007669"/>
    <property type="project" value="InterPro"/>
</dbReference>
<dbReference type="GO" id="GO:0016853">
    <property type="term" value="F:isomerase activity"/>
    <property type="evidence" value="ECO:0007669"/>
    <property type="project" value="UniProtKB-KW"/>
</dbReference>
<dbReference type="GO" id="GO:0051082">
    <property type="term" value="F:unfolded protein binding"/>
    <property type="evidence" value="ECO:0007669"/>
    <property type="project" value="UniProtKB-UniRule"/>
</dbReference>
<dbReference type="GO" id="GO:0042026">
    <property type="term" value="P:protein refolding"/>
    <property type="evidence" value="ECO:0007669"/>
    <property type="project" value="UniProtKB-UniRule"/>
</dbReference>
<dbReference type="CDD" id="cd03344">
    <property type="entry name" value="GroEL"/>
    <property type="match status" value="1"/>
</dbReference>
<dbReference type="FunFam" id="1.10.560.10:FF:000001">
    <property type="entry name" value="60 kDa chaperonin"/>
    <property type="match status" value="1"/>
</dbReference>
<dbReference type="FunFam" id="3.50.7.10:FF:000001">
    <property type="entry name" value="60 kDa chaperonin"/>
    <property type="match status" value="1"/>
</dbReference>
<dbReference type="Gene3D" id="3.50.7.10">
    <property type="entry name" value="GroEL"/>
    <property type="match status" value="1"/>
</dbReference>
<dbReference type="Gene3D" id="1.10.560.10">
    <property type="entry name" value="GroEL-like equatorial domain"/>
    <property type="match status" value="1"/>
</dbReference>
<dbReference type="Gene3D" id="3.30.260.10">
    <property type="entry name" value="TCP-1-like chaperonin intermediate domain"/>
    <property type="match status" value="1"/>
</dbReference>
<dbReference type="HAMAP" id="MF_00600">
    <property type="entry name" value="CH60"/>
    <property type="match status" value="1"/>
</dbReference>
<dbReference type="InterPro" id="IPR018370">
    <property type="entry name" value="Chaperonin_Cpn60_CS"/>
</dbReference>
<dbReference type="InterPro" id="IPR001844">
    <property type="entry name" value="Cpn60/GroEL"/>
</dbReference>
<dbReference type="InterPro" id="IPR002423">
    <property type="entry name" value="Cpn60/GroEL/TCP-1"/>
</dbReference>
<dbReference type="InterPro" id="IPR027409">
    <property type="entry name" value="GroEL-like_apical_dom_sf"/>
</dbReference>
<dbReference type="InterPro" id="IPR027413">
    <property type="entry name" value="GROEL-like_equatorial_sf"/>
</dbReference>
<dbReference type="InterPro" id="IPR027410">
    <property type="entry name" value="TCP-1-like_intermed_sf"/>
</dbReference>
<dbReference type="NCBIfam" id="TIGR02348">
    <property type="entry name" value="GroEL"/>
    <property type="match status" value="1"/>
</dbReference>
<dbReference type="NCBIfam" id="NF000592">
    <property type="entry name" value="PRK00013.1"/>
    <property type="match status" value="1"/>
</dbReference>
<dbReference type="NCBIfam" id="NF009487">
    <property type="entry name" value="PRK12849.1"/>
    <property type="match status" value="1"/>
</dbReference>
<dbReference type="NCBIfam" id="NF009488">
    <property type="entry name" value="PRK12850.1"/>
    <property type="match status" value="1"/>
</dbReference>
<dbReference type="NCBIfam" id="NF009489">
    <property type="entry name" value="PRK12851.1"/>
    <property type="match status" value="1"/>
</dbReference>
<dbReference type="PANTHER" id="PTHR45633">
    <property type="entry name" value="60 KDA HEAT SHOCK PROTEIN, MITOCHONDRIAL"/>
    <property type="match status" value="1"/>
</dbReference>
<dbReference type="Pfam" id="PF00118">
    <property type="entry name" value="Cpn60_TCP1"/>
    <property type="match status" value="1"/>
</dbReference>
<dbReference type="PRINTS" id="PR00298">
    <property type="entry name" value="CHAPERONIN60"/>
</dbReference>
<dbReference type="SUPFAM" id="SSF52029">
    <property type="entry name" value="GroEL apical domain-like"/>
    <property type="match status" value="1"/>
</dbReference>
<dbReference type="SUPFAM" id="SSF48592">
    <property type="entry name" value="GroEL equatorial domain-like"/>
    <property type="match status" value="1"/>
</dbReference>
<dbReference type="SUPFAM" id="SSF54849">
    <property type="entry name" value="GroEL-intermediate domain like"/>
    <property type="match status" value="1"/>
</dbReference>
<dbReference type="PROSITE" id="PS00296">
    <property type="entry name" value="CHAPERONINS_CPN60"/>
    <property type="match status" value="1"/>
</dbReference>
<evidence type="ECO:0000255" key="1">
    <source>
        <dbReference type="HAMAP-Rule" id="MF_00600"/>
    </source>
</evidence>
<name>CH60_SHEHH</name>
<gene>
    <name evidence="1" type="primary">groEL</name>
    <name evidence="1" type="synonym">groL</name>
    <name type="ordered locus">Shal_3776</name>
</gene>
<protein>
    <recommendedName>
        <fullName evidence="1">Chaperonin GroEL</fullName>
        <ecNumber evidence="1">5.6.1.7</ecNumber>
    </recommendedName>
    <alternativeName>
        <fullName evidence="1">60 kDa chaperonin</fullName>
    </alternativeName>
    <alternativeName>
        <fullName evidence="1">Chaperonin-60</fullName>
        <shortName evidence="1">Cpn60</shortName>
    </alternativeName>
</protein>
<accession>B0TVL3</accession>
<keyword id="KW-0067">ATP-binding</keyword>
<keyword id="KW-0143">Chaperone</keyword>
<keyword id="KW-0963">Cytoplasm</keyword>
<keyword id="KW-0413">Isomerase</keyword>
<keyword id="KW-0547">Nucleotide-binding</keyword>
<feature type="chain" id="PRO_1000082488" description="Chaperonin GroEL">
    <location>
        <begin position="1"/>
        <end position="547"/>
    </location>
</feature>
<feature type="binding site" evidence="1">
    <location>
        <begin position="30"/>
        <end position="33"/>
    </location>
    <ligand>
        <name>ATP</name>
        <dbReference type="ChEBI" id="CHEBI:30616"/>
    </ligand>
</feature>
<feature type="binding site" evidence="1">
    <location>
        <position position="51"/>
    </location>
    <ligand>
        <name>ATP</name>
        <dbReference type="ChEBI" id="CHEBI:30616"/>
    </ligand>
</feature>
<feature type="binding site" evidence="1">
    <location>
        <begin position="87"/>
        <end position="91"/>
    </location>
    <ligand>
        <name>ATP</name>
        <dbReference type="ChEBI" id="CHEBI:30616"/>
    </ligand>
</feature>
<feature type="binding site" evidence="1">
    <location>
        <position position="415"/>
    </location>
    <ligand>
        <name>ATP</name>
        <dbReference type="ChEBI" id="CHEBI:30616"/>
    </ligand>
</feature>
<feature type="binding site" evidence="1">
    <location>
        <position position="495"/>
    </location>
    <ligand>
        <name>ATP</name>
        <dbReference type="ChEBI" id="CHEBI:30616"/>
    </ligand>
</feature>
<comment type="function">
    <text evidence="1">Together with its co-chaperonin GroES, plays an essential role in assisting protein folding. The GroEL-GroES system forms a nano-cage that allows encapsulation of the non-native substrate proteins and provides a physical environment optimized to promote and accelerate protein folding.</text>
</comment>
<comment type="catalytic activity">
    <reaction evidence="1">
        <text>ATP + H2O + a folded polypeptide = ADP + phosphate + an unfolded polypeptide.</text>
        <dbReference type="EC" id="5.6.1.7"/>
    </reaction>
</comment>
<comment type="subunit">
    <text evidence="1">Forms a cylinder of 14 subunits composed of two heptameric rings stacked back-to-back. Interacts with the co-chaperonin GroES.</text>
</comment>
<comment type="subcellular location">
    <subcellularLocation>
        <location evidence="1">Cytoplasm</location>
    </subcellularLocation>
</comment>
<comment type="similarity">
    <text evidence="1">Belongs to the chaperonin (HSP60) family.</text>
</comment>